<evidence type="ECO:0000255" key="1">
    <source>
        <dbReference type="HAMAP-Rule" id="MF_00074"/>
    </source>
</evidence>
<sequence length="210" mass="22915">MTFAEELQQILPPDLPHRDAVIASAARHLDLIVETNQHFNLTRIVSPREAAIKHIADSVIPWRLFSGAPHVVDAGSGAGFPGIPLALVLPETRFTLLESTQKKARFIESAAADLGLANVEVRPDRAEDWLKTHRASIVTARAVAPLTRAVGLFAHALRAGARILLYKGPDAEAEIAEAASEAAKRRVHLRVVERYELPDSLGARTIVEIR</sequence>
<comment type="function">
    <text evidence="1">Specifically methylates the N7 position of a guanine in 16S rRNA.</text>
</comment>
<comment type="subcellular location">
    <subcellularLocation>
        <location evidence="1">Cytoplasm</location>
    </subcellularLocation>
</comment>
<comment type="similarity">
    <text evidence="1">Belongs to the methyltransferase superfamily. RNA methyltransferase RsmG family.</text>
</comment>
<gene>
    <name evidence="1" type="primary">rsmG</name>
    <name type="ordered locus">Acid_7917</name>
</gene>
<name>RSMG_SOLUE</name>
<organism>
    <name type="scientific">Solibacter usitatus (strain Ellin6076)</name>
    <dbReference type="NCBI Taxonomy" id="234267"/>
    <lineage>
        <taxon>Bacteria</taxon>
        <taxon>Pseudomonadati</taxon>
        <taxon>Acidobacteriota</taxon>
        <taxon>Terriglobia</taxon>
        <taxon>Bryobacterales</taxon>
        <taxon>Solibacteraceae</taxon>
        <taxon>Candidatus Solibacter</taxon>
    </lineage>
</organism>
<keyword id="KW-0963">Cytoplasm</keyword>
<keyword id="KW-0489">Methyltransferase</keyword>
<keyword id="KW-0698">rRNA processing</keyword>
<keyword id="KW-0949">S-adenosyl-L-methionine</keyword>
<keyword id="KW-0808">Transferase</keyword>
<reference key="1">
    <citation type="journal article" date="2009" name="Appl. Environ. Microbiol.">
        <title>Three genomes from the phylum Acidobacteria provide insight into the lifestyles of these microorganisms in soils.</title>
        <authorList>
            <person name="Ward N.L."/>
            <person name="Challacombe J.F."/>
            <person name="Janssen P.H."/>
            <person name="Henrissat B."/>
            <person name="Coutinho P.M."/>
            <person name="Wu M."/>
            <person name="Xie G."/>
            <person name="Haft D.H."/>
            <person name="Sait M."/>
            <person name="Badger J."/>
            <person name="Barabote R.D."/>
            <person name="Bradley B."/>
            <person name="Brettin T.S."/>
            <person name="Brinkac L.M."/>
            <person name="Bruce D."/>
            <person name="Creasy T."/>
            <person name="Daugherty S.C."/>
            <person name="Davidsen T.M."/>
            <person name="DeBoy R.T."/>
            <person name="Detter J.C."/>
            <person name="Dodson R.J."/>
            <person name="Durkin A.S."/>
            <person name="Ganapathy A."/>
            <person name="Gwinn-Giglio M."/>
            <person name="Han C.S."/>
            <person name="Khouri H."/>
            <person name="Kiss H."/>
            <person name="Kothari S.P."/>
            <person name="Madupu R."/>
            <person name="Nelson K.E."/>
            <person name="Nelson W.C."/>
            <person name="Paulsen I."/>
            <person name="Penn K."/>
            <person name="Ren Q."/>
            <person name="Rosovitz M.J."/>
            <person name="Selengut J.D."/>
            <person name="Shrivastava S."/>
            <person name="Sullivan S.A."/>
            <person name="Tapia R."/>
            <person name="Thompson L.S."/>
            <person name="Watkins K.L."/>
            <person name="Yang Q."/>
            <person name="Yu C."/>
            <person name="Zafar N."/>
            <person name="Zhou L."/>
            <person name="Kuske C.R."/>
        </authorList>
    </citation>
    <scope>NUCLEOTIDE SEQUENCE [LARGE SCALE GENOMIC DNA]</scope>
    <source>
        <strain>Ellin6076</strain>
    </source>
</reference>
<accession>Q01NF9</accession>
<protein>
    <recommendedName>
        <fullName evidence="1">Ribosomal RNA small subunit methyltransferase G</fullName>
        <ecNumber evidence="1">2.1.1.-</ecNumber>
    </recommendedName>
    <alternativeName>
        <fullName evidence="1">16S rRNA 7-methylguanosine methyltransferase</fullName>
        <shortName evidence="1">16S rRNA m7G methyltransferase</shortName>
    </alternativeName>
</protein>
<proteinExistence type="inferred from homology"/>
<feature type="chain" id="PRO_0000335429" description="Ribosomal RNA small subunit methyltransferase G">
    <location>
        <begin position="1"/>
        <end position="210"/>
    </location>
</feature>
<feature type="binding site" evidence="1">
    <location>
        <position position="75"/>
    </location>
    <ligand>
        <name>S-adenosyl-L-methionine</name>
        <dbReference type="ChEBI" id="CHEBI:59789"/>
    </ligand>
</feature>
<feature type="binding site" evidence="1">
    <location>
        <position position="80"/>
    </location>
    <ligand>
        <name>S-adenosyl-L-methionine</name>
        <dbReference type="ChEBI" id="CHEBI:59789"/>
    </ligand>
</feature>
<feature type="binding site" evidence="1">
    <location>
        <begin position="98"/>
        <end position="100"/>
    </location>
    <ligand>
        <name>S-adenosyl-L-methionine</name>
        <dbReference type="ChEBI" id="CHEBI:59789"/>
    </ligand>
</feature>
<feature type="binding site" evidence="1">
    <location>
        <begin position="126"/>
        <end position="127"/>
    </location>
    <ligand>
        <name>S-adenosyl-L-methionine</name>
        <dbReference type="ChEBI" id="CHEBI:59789"/>
    </ligand>
</feature>
<feature type="binding site" evidence="1">
    <location>
        <position position="141"/>
    </location>
    <ligand>
        <name>S-adenosyl-L-methionine</name>
        <dbReference type="ChEBI" id="CHEBI:59789"/>
    </ligand>
</feature>
<dbReference type="EC" id="2.1.1.-" evidence="1"/>
<dbReference type="EMBL" id="CP000473">
    <property type="protein sequence ID" value="ABJ88811.1"/>
    <property type="molecule type" value="Genomic_DNA"/>
</dbReference>
<dbReference type="SMR" id="Q01NF9"/>
<dbReference type="FunCoup" id="Q01NF9">
    <property type="interactions" value="515"/>
</dbReference>
<dbReference type="STRING" id="234267.Acid_7917"/>
<dbReference type="KEGG" id="sus:Acid_7917"/>
<dbReference type="eggNOG" id="COG0357">
    <property type="taxonomic scope" value="Bacteria"/>
</dbReference>
<dbReference type="HOGENOM" id="CLU_065341_2_0_0"/>
<dbReference type="InParanoid" id="Q01NF9"/>
<dbReference type="OrthoDB" id="9808773at2"/>
<dbReference type="GO" id="GO:0005829">
    <property type="term" value="C:cytosol"/>
    <property type="evidence" value="ECO:0007669"/>
    <property type="project" value="TreeGrafter"/>
</dbReference>
<dbReference type="GO" id="GO:0070043">
    <property type="term" value="F:rRNA (guanine-N7-)-methyltransferase activity"/>
    <property type="evidence" value="ECO:0007669"/>
    <property type="project" value="UniProtKB-UniRule"/>
</dbReference>
<dbReference type="Gene3D" id="3.40.50.150">
    <property type="entry name" value="Vaccinia Virus protein VP39"/>
    <property type="match status" value="1"/>
</dbReference>
<dbReference type="HAMAP" id="MF_00074">
    <property type="entry name" value="16SrRNA_methyltr_G"/>
    <property type="match status" value="1"/>
</dbReference>
<dbReference type="InterPro" id="IPR003682">
    <property type="entry name" value="rRNA_ssu_MeTfrase_G"/>
</dbReference>
<dbReference type="InterPro" id="IPR029063">
    <property type="entry name" value="SAM-dependent_MTases_sf"/>
</dbReference>
<dbReference type="NCBIfam" id="TIGR00138">
    <property type="entry name" value="rsmG_gidB"/>
    <property type="match status" value="1"/>
</dbReference>
<dbReference type="PANTHER" id="PTHR31760">
    <property type="entry name" value="S-ADENOSYL-L-METHIONINE-DEPENDENT METHYLTRANSFERASES SUPERFAMILY PROTEIN"/>
    <property type="match status" value="1"/>
</dbReference>
<dbReference type="PANTHER" id="PTHR31760:SF0">
    <property type="entry name" value="S-ADENOSYL-L-METHIONINE-DEPENDENT METHYLTRANSFERASES SUPERFAMILY PROTEIN"/>
    <property type="match status" value="1"/>
</dbReference>
<dbReference type="Pfam" id="PF02527">
    <property type="entry name" value="GidB"/>
    <property type="match status" value="1"/>
</dbReference>
<dbReference type="PIRSF" id="PIRSF003078">
    <property type="entry name" value="GidB"/>
    <property type="match status" value="1"/>
</dbReference>
<dbReference type="SUPFAM" id="SSF53335">
    <property type="entry name" value="S-adenosyl-L-methionine-dependent methyltransferases"/>
    <property type="match status" value="1"/>
</dbReference>